<feature type="chain" id="PRO_0000095958" description="Protein translocase subunit SecDF">
    <location>
        <begin position="1"/>
        <end position="758"/>
    </location>
</feature>
<feature type="transmembrane region" description="Helical" evidence="2">
    <location>
        <begin position="9"/>
        <end position="29"/>
    </location>
</feature>
<feature type="transmembrane region" description="Helical" evidence="2">
    <location>
        <begin position="277"/>
        <end position="297"/>
    </location>
</feature>
<feature type="transmembrane region" description="Helical" evidence="2">
    <location>
        <begin position="301"/>
        <end position="321"/>
    </location>
</feature>
<feature type="transmembrane region" description="Helical" evidence="2">
    <location>
        <begin position="324"/>
        <end position="344"/>
    </location>
</feature>
<feature type="transmembrane region" description="Helical" evidence="2">
    <location>
        <begin position="372"/>
        <end position="394"/>
    </location>
</feature>
<feature type="transmembrane region" description="Helical" evidence="2">
    <location>
        <begin position="404"/>
        <end position="426"/>
    </location>
</feature>
<feature type="transmembrane region" description="Helical" evidence="2">
    <location>
        <begin position="460"/>
        <end position="480"/>
    </location>
</feature>
<feature type="transmembrane region" description="Helical" evidence="2">
    <location>
        <begin position="579"/>
        <end position="599"/>
    </location>
</feature>
<feature type="transmembrane region" description="Helical" evidence="2">
    <location>
        <begin position="605"/>
        <end position="625"/>
    </location>
</feature>
<feature type="transmembrane region" description="Helical" evidence="2">
    <location>
        <begin position="631"/>
        <end position="651"/>
    </location>
</feature>
<feature type="transmembrane region" description="Helical" evidence="2">
    <location>
        <begin position="682"/>
        <end position="702"/>
    </location>
</feature>
<feature type="transmembrane region" description="Helical" evidence="2">
    <location>
        <begin position="706"/>
        <end position="726"/>
    </location>
</feature>
<protein>
    <recommendedName>
        <fullName>Protein translocase subunit SecDF</fullName>
    </recommendedName>
</protein>
<evidence type="ECO:0000250" key="1"/>
<evidence type="ECO:0000255" key="2"/>
<evidence type="ECO:0000305" key="3"/>
<gene>
    <name type="primary">secDF</name>
    <name type="ordered locus">BruAb1_0903</name>
</gene>
<reference key="1">
    <citation type="journal article" date="2005" name="J. Bacteriol.">
        <title>Completion of the genome sequence of Brucella abortus and comparison to the highly similar genomes of Brucella melitensis and Brucella suis.</title>
        <authorList>
            <person name="Halling S.M."/>
            <person name="Peterson-Burch B.D."/>
            <person name="Bricker B.J."/>
            <person name="Zuerner R.L."/>
            <person name="Qing Z."/>
            <person name="Li L.-L."/>
            <person name="Kapur V."/>
            <person name="Alt D.P."/>
            <person name="Olsen S.C."/>
        </authorList>
    </citation>
    <scope>NUCLEOTIDE SEQUENCE [LARGE SCALE GENOMIC DNA]</scope>
    <source>
        <strain>9-941</strain>
    </source>
</reference>
<proteinExistence type="inferred from homology"/>
<keyword id="KW-0997">Cell inner membrane</keyword>
<keyword id="KW-1003">Cell membrane</keyword>
<keyword id="KW-0472">Membrane</keyword>
<keyword id="KW-0653">Protein transport</keyword>
<keyword id="KW-0811">Translocation</keyword>
<keyword id="KW-0812">Transmembrane</keyword>
<keyword id="KW-1133">Transmembrane helix</keyword>
<keyword id="KW-0813">Transport</keyword>
<sequence length="758" mass="81982">MLYFSRWKSALIWLAVLVSLIIASPNFFSRETLENLPDFLPKKQVSLGLDLSGGSRLILQVQNAGKTDLETTANIMRQRLEELGYGNPVVEGEGRNQIRVEVPGLYDAQLLKDILTIRGNLSFRAMDDTMSPDDAIRGTPPADSEIVYSFDDPPVGYLLKKTPILTGHDITDAKASISADDGQPVITLTLDDNGRRRLADLTAQGNENSFAIVVDNQVVSAPTVSGPLDTSELQIEGAFDLQAANNMAVVLRSGALPQAVTVLEERTIASALGEDYASAAVLAALLAALVVGLFMVLSYGILGVIALVALVVNIVILTAVLSLIGASISLASIAGLVLTIGLAVDAHILIYERVREDRRKGYSVVQAMESGFYRALSTIVDANLTTLIAALVLFLLGSGTVHGFALTVAIGIGTTLFTTLTFTRLLIAQWVRTAKPKEVPKRRLKLVPTVTHIPFMRLQFVTLGISVLACAIVVALFVNIGFNYGIDFRGGSMVELQARNGDANLEDINERLAELNIDSARVLPAKSPRSALVIIGSQEVGDDAEQTVAVKLRGEFEQDYSFQRVDVVGPTVSEQLSRAGVLAVILSLIGIFIYVWFRFRWQLALGAVLSTLHDVVILSGMFIVFRMEFNLWSVAAILTIIGYSLNDTVVIYDRVRENLRRYKSAPLPAIIDASINQTLSRTLLTSFVTFLAHVPLYAFGGSEIRMFALALSVGIIVASYSSIFIAAPLLVQFGLKPRETDAGDAVDAELAQSLNLES</sequence>
<accession>P0C117</accession>
<accession>Q57DL6</accession>
<accession>Q9ZG86</accession>
<name>SECDF_BRUAB</name>
<organism>
    <name type="scientific">Brucella abortus biovar 1 (strain 9-941)</name>
    <dbReference type="NCBI Taxonomy" id="262698"/>
    <lineage>
        <taxon>Bacteria</taxon>
        <taxon>Pseudomonadati</taxon>
        <taxon>Pseudomonadota</taxon>
        <taxon>Alphaproteobacteria</taxon>
        <taxon>Hyphomicrobiales</taxon>
        <taxon>Brucellaceae</taxon>
        <taxon>Brucella/Ochrobactrum group</taxon>
        <taxon>Brucella</taxon>
    </lineage>
</organism>
<comment type="function">
    <text evidence="1">Part of the Sec protein translocase complex. Interacts with the SecYEG preprotein conducting channel. SecDF uses the proton motive force (PMF) to complete protein translocation after the ATP-dependent function of SecA (By similarity).</text>
</comment>
<comment type="subunit">
    <text evidence="1">Part of the essential Sec protein translocation apparatus which comprises SecA, SecYEG and auxiliary proteins SecDF-YajC and YidC.</text>
</comment>
<comment type="subcellular location">
    <subcellularLocation>
        <location evidence="1">Cell inner membrane</location>
        <topology evidence="1">Multi-pass membrane protein</topology>
    </subcellularLocation>
</comment>
<comment type="similarity">
    <text evidence="3">In the N-terminal section; belongs to the SecD/SecF family. SecD subfamily.</text>
</comment>
<comment type="similarity">
    <text evidence="3">In the C-terminal section; belongs to the SecD/SecF family. SecF subfamily.</text>
</comment>
<dbReference type="EMBL" id="AE017223">
    <property type="protein sequence ID" value="AAX74268.1"/>
    <property type="molecule type" value="Genomic_DNA"/>
</dbReference>
<dbReference type="RefSeq" id="WP_002969411.1">
    <property type="nucleotide sequence ID" value="NC_006932.1"/>
</dbReference>
<dbReference type="SMR" id="P0C117"/>
<dbReference type="EnsemblBacteria" id="AAX74268">
    <property type="protein sequence ID" value="AAX74268"/>
    <property type="gene ID" value="BruAb1_0903"/>
</dbReference>
<dbReference type="GeneID" id="93016731"/>
<dbReference type="KEGG" id="bmb:BruAb1_0903"/>
<dbReference type="HOGENOM" id="CLU_007894_2_1_5"/>
<dbReference type="Proteomes" id="UP000000540">
    <property type="component" value="Chromosome I"/>
</dbReference>
<dbReference type="GO" id="GO:0005886">
    <property type="term" value="C:plasma membrane"/>
    <property type="evidence" value="ECO:0007669"/>
    <property type="project" value="UniProtKB-SubCell"/>
</dbReference>
<dbReference type="GO" id="GO:0015450">
    <property type="term" value="F:protein-transporting ATPase activity"/>
    <property type="evidence" value="ECO:0007669"/>
    <property type="project" value="InterPro"/>
</dbReference>
<dbReference type="GO" id="GO:0065002">
    <property type="term" value="P:intracellular protein transmembrane transport"/>
    <property type="evidence" value="ECO:0007669"/>
    <property type="project" value="UniProtKB-UniRule"/>
</dbReference>
<dbReference type="GO" id="GO:0006605">
    <property type="term" value="P:protein targeting"/>
    <property type="evidence" value="ECO:0007669"/>
    <property type="project" value="UniProtKB-UniRule"/>
</dbReference>
<dbReference type="GO" id="GO:0043952">
    <property type="term" value="P:protein transport by the Sec complex"/>
    <property type="evidence" value="ECO:0007669"/>
    <property type="project" value="UniProtKB-UniRule"/>
</dbReference>
<dbReference type="FunFam" id="1.20.1640.10:FF:000024">
    <property type="entry name" value="Multifunctional fusion protein"/>
    <property type="match status" value="1"/>
</dbReference>
<dbReference type="Gene3D" id="3.30.1360.200">
    <property type="match status" value="1"/>
</dbReference>
<dbReference type="Gene3D" id="3.30.70.3400">
    <property type="match status" value="1"/>
</dbReference>
<dbReference type="Gene3D" id="1.20.1640.10">
    <property type="entry name" value="Multidrug efflux transporter AcrB transmembrane domain"/>
    <property type="match status" value="1"/>
</dbReference>
<dbReference type="HAMAP" id="MF_01463_B">
    <property type="entry name" value="SecD_B"/>
    <property type="match status" value="1"/>
</dbReference>
<dbReference type="HAMAP" id="MF_01464_B">
    <property type="entry name" value="SecF_B"/>
    <property type="match status" value="1"/>
</dbReference>
<dbReference type="InterPro" id="IPR005791">
    <property type="entry name" value="SecD"/>
</dbReference>
<dbReference type="InterPro" id="IPR022813">
    <property type="entry name" value="SecD/SecF_arch_bac"/>
</dbReference>
<dbReference type="InterPro" id="IPR022645">
    <property type="entry name" value="SecD/SecF_bac"/>
</dbReference>
<dbReference type="InterPro" id="IPR022646">
    <property type="entry name" value="SecD/SecF_CS"/>
</dbReference>
<dbReference type="InterPro" id="IPR048631">
    <property type="entry name" value="SecD_1st"/>
</dbReference>
<dbReference type="InterPro" id="IPR048634">
    <property type="entry name" value="SecD_SecF_C"/>
</dbReference>
<dbReference type="InterPro" id="IPR055344">
    <property type="entry name" value="SecD_SecF_C_bact"/>
</dbReference>
<dbReference type="InterPro" id="IPR054384">
    <property type="entry name" value="SecDF_P1_head"/>
</dbReference>
<dbReference type="InterPro" id="IPR005665">
    <property type="entry name" value="SecF_bac"/>
</dbReference>
<dbReference type="NCBIfam" id="TIGR00916">
    <property type="entry name" value="2A0604s01"/>
    <property type="match status" value="2"/>
</dbReference>
<dbReference type="NCBIfam" id="NF009580">
    <property type="entry name" value="PRK13023.1"/>
    <property type="match status" value="1"/>
</dbReference>
<dbReference type="NCBIfam" id="TIGR01129">
    <property type="entry name" value="secD"/>
    <property type="match status" value="1"/>
</dbReference>
<dbReference type="NCBIfam" id="TIGR00966">
    <property type="entry name" value="transloc_SecF"/>
    <property type="match status" value="1"/>
</dbReference>
<dbReference type="PANTHER" id="PTHR30081:SF1">
    <property type="entry name" value="PROTEIN TRANSLOCASE SUBUNIT SECD"/>
    <property type="match status" value="1"/>
</dbReference>
<dbReference type="PANTHER" id="PTHR30081">
    <property type="entry name" value="PROTEIN-EXPORT MEMBRANE PROTEIN SEC"/>
    <property type="match status" value="1"/>
</dbReference>
<dbReference type="Pfam" id="PF07549">
    <property type="entry name" value="Sec_GG"/>
    <property type="match status" value="2"/>
</dbReference>
<dbReference type="Pfam" id="PF21760">
    <property type="entry name" value="SecD_1st"/>
    <property type="match status" value="1"/>
</dbReference>
<dbReference type="Pfam" id="PF02355">
    <property type="entry name" value="SecD_SecF_C"/>
    <property type="match status" value="2"/>
</dbReference>
<dbReference type="Pfam" id="PF22599">
    <property type="entry name" value="SecDF_P1_head"/>
    <property type="match status" value="1"/>
</dbReference>
<dbReference type="PRINTS" id="PR01755">
    <property type="entry name" value="SECFTRNLCASE"/>
</dbReference>
<dbReference type="SUPFAM" id="SSF82866">
    <property type="entry name" value="Multidrug efflux transporter AcrB transmembrane domain"/>
    <property type="match status" value="2"/>
</dbReference>